<feature type="chain" id="PRO_1000065436" description="Antiholin-like protein LrgA">
    <location>
        <begin position="1"/>
        <end position="145"/>
    </location>
</feature>
<feature type="transmembrane region" description="Helical" evidence="1">
    <location>
        <begin position="10"/>
        <end position="30"/>
    </location>
</feature>
<feature type="transmembrane region" description="Helical" evidence="1">
    <location>
        <begin position="33"/>
        <end position="53"/>
    </location>
</feature>
<feature type="transmembrane region" description="Helical" evidence="1">
    <location>
        <begin position="72"/>
        <end position="92"/>
    </location>
</feature>
<feature type="transmembrane region" description="Helical" evidence="1">
    <location>
        <begin position="96"/>
        <end position="116"/>
    </location>
</feature>
<organism>
    <name type="scientific">Staphylococcus aureus (strain Mu3 / ATCC 700698)</name>
    <dbReference type="NCBI Taxonomy" id="418127"/>
    <lineage>
        <taxon>Bacteria</taxon>
        <taxon>Bacillati</taxon>
        <taxon>Bacillota</taxon>
        <taxon>Bacilli</taxon>
        <taxon>Bacillales</taxon>
        <taxon>Staphylococcaceae</taxon>
        <taxon>Staphylococcus</taxon>
    </lineage>
</organism>
<keyword id="KW-1003">Cell membrane</keyword>
<keyword id="KW-0204">Cytolysis</keyword>
<keyword id="KW-0472">Membrane</keyword>
<keyword id="KW-0812">Transmembrane</keyword>
<keyword id="KW-1133">Transmembrane helix</keyword>
<comment type="function">
    <text evidence="1">Inhibits the expression or activity of extracellular murein hydrolases by interacting, possibly with LrgB, with the holin-like proteins CidA and/or CidB. The LrgAB and CidAB proteins may affect the proton motive force of the membrane. May be involved in programmed cell death (PCD), possibly triggering PCD in response to antibiotics and environmental stresses.</text>
</comment>
<comment type="subcellular location">
    <subcellularLocation>
        <location evidence="1">Cell membrane</location>
        <topology evidence="1">Multi-pass membrane protein</topology>
    </subcellularLocation>
</comment>
<comment type="similarity">
    <text evidence="1">Belongs to the CidA/LrgA family. LrgA subfamily.</text>
</comment>
<evidence type="ECO:0000255" key="1">
    <source>
        <dbReference type="HAMAP-Rule" id="MF_01141"/>
    </source>
</evidence>
<sequence length="145" mass="15582">MKQQKDASKPAHFFHQVIVIALVLFVSKIIESFMPIPMPASVIGLVLLFVLLCTGAVKLGEVEKVGTTLTNNIGLLFVPAGISVVNSLGVISQAPFLIIGLIIVSTILLLICTGYVTQIIMKVTSRSKGDKVTKKIKIEEAQAHD</sequence>
<protein>
    <recommendedName>
        <fullName evidence="1">Antiholin-like protein LrgA</fullName>
    </recommendedName>
</protein>
<accession>A7WXS6</accession>
<dbReference type="EMBL" id="AP009324">
    <property type="protein sequence ID" value="BAF77144.1"/>
    <property type="molecule type" value="Genomic_DNA"/>
</dbReference>
<dbReference type="SMR" id="A7WXS6"/>
<dbReference type="KEGG" id="saw:SAHV_0261"/>
<dbReference type="HOGENOM" id="CLU_113736_0_1_9"/>
<dbReference type="GO" id="GO:0005886">
    <property type="term" value="C:plasma membrane"/>
    <property type="evidence" value="ECO:0007669"/>
    <property type="project" value="UniProtKB-SubCell"/>
</dbReference>
<dbReference type="GO" id="GO:0019835">
    <property type="term" value="P:cytolysis"/>
    <property type="evidence" value="ECO:0007669"/>
    <property type="project" value="UniProtKB-UniRule"/>
</dbReference>
<dbReference type="GO" id="GO:0031640">
    <property type="term" value="P:killing of cells of another organism"/>
    <property type="evidence" value="ECO:0007669"/>
    <property type="project" value="UniProtKB-KW"/>
</dbReference>
<dbReference type="GO" id="GO:0012501">
    <property type="term" value="P:programmed cell death"/>
    <property type="evidence" value="ECO:0007669"/>
    <property type="project" value="UniProtKB-UniRule"/>
</dbReference>
<dbReference type="HAMAP" id="MF_01141">
    <property type="entry name" value="LrgA"/>
    <property type="match status" value="1"/>
</dbReference>
<dbReference type="InterPro" id="IPR023736">
    <property type="entry name" value="Antiholin-like_LrgA"/>
</dbReference>
<dbReference type="InterPro" id="IPR005538">
    <property type="entry name" value="LrgA/CidA"/>
</dbReference>
<dbReference type="NCBIfam" id="NF003155">
    <property type="entry name" value="PRK04125.1"/>
    <property type="match status" value="1"/>
</dbReference>
<dbReference type="PANTHER" id="PTHR33931:SF4">
    <property type="entry name" value="ANTIHOLIN-LIKE PROTEIN LRGA"/>
    <property type="match status" value="1"/>
</dbReference>
<dbReference type="PANTHER" id="PTHR33931">
    <property type="entry name" value="HOLIN-LIKE PROTEIN CIDA-RELATED"/>
    <property type="match status" value="1"/>
</dbReference>
<dbReference type="Pfam" id="PF03788">
    <property type="entry name" value="LrgA"/>
    <property type="match status" value="1"/>
</dbReference>
<name>LRGA_STAA1</name>
<gene>
    <name evidence="1" type="primary">lrgA</name>
    <name type="ordered locus">SAHV_0261</name>
</gene>
<proteinExistence type="inferred from homology"/>
<reference key="1">
    <citation type="journal article" date="2008" name="Antimicrob. Agents Chemother.">
        <title>Mutated response regulator graR is responsible for phenotypic conversion of Staphylococcus aureus from heterogeneous vancomycin-intermediate resistance to vancomycin-intermediate resistance.</title>
        <authorList>
            <person name="Neoh H.-M."/>
            <person name="Cui L."/>
            <person name="Yuzawa H."/>
            <person name="Takeuchi F."/>
            <person name="Matsuo M."/>
            <person name="Hiramatsu K."/>
        </authorList>
    </citation>
    <scope>NUCLEOTIDE SEQUENCE [LARGE SCALE GENOMIC DNA]</scope>
    <source>
        <strain>Mu3 / ATCC 700698</strain>
    </source>
</reference>